<proteinExistence type="evidence at protein level"/>
<protein>
    <recommendedName>
        <fullName>Endochitinase 1</fullName>
        <ecNumber>3.2.1.14</ecNumber>
    </recommendedName>
    <alternativeName>
        <fullName>CiX1</fullName>
    </alternativeName>
    <alternativeName>
        <fullName>Complement-fixation antigen</fullName>
        <shortName>CF-AG</shortName>
        <shortName>CF-antigen</shortName>
    </alternativeName>
</protein>
<dbReference type="EC" id="3.2.1.14"/>
<dbReference type="EMBL" id="U51271">
    <property type="protein sequence ID" value="AAA96515.1"/>
    <property type="molecule type" value="Genomic_DNA"/>
</dbReference>
<dbReference type="EMBL" id="U33265">
    <property type="protein sequence ID" value="AAB06687.1"/>
    <property type="molecule type" value="mRNA"/>
</dbReference>
<dbReference type="EMBL" id="U60806">
    <property type="protein sequence ID" value="AAB48566.1"/>
    <property type="molecule type" value="Genomic_DNA"/>
</dbReference>
<dbReference type="EMBL" id="U60807">
    <property type="protein sequence ID" value="AAB48567.1"/>
    <property type="molecule type" value="mRNA"/>
</dbReference>
<dbReference type="EMBL" id="GL636504">
    <property type="protein sequence ID" value="EFW14650.1"/>
    <property type="molecule type" value="Genomic_DNA"/>
</dbReference>
<dbReference type="EMBL" id="AB232745">
    <property type="protein sequence ID" value="BAE20289.1"/>
    <property type="status" value="ALT_SEQ"/>
    <property type="molecule type" value="Genomic_DNA"/>
</dbReference>
<dbReference type="EMBL" id="AB232746">
    <property type="protein sequence ID" value="BAE20290.1"/>
    <property type="status" value="ALT_SEQ"/>
    <property type="molecule type" value="Genomic_DNA"/>
</dbReference>
<dbReference type="EMBL" id="AB232747">
    <property type="protein sequence ID" value="BAE20291.1"/>
    <property type="status" value="ALT_SEQ"/>
    <property type="molecule type" value="Genomic_DNA"/>
</dbReference>
<dbReference type="EMBL" id="AB232748">
    <property type="protein sequence ID" value="BAE20292.1"/>
    <property type="status" value="ALT_SEQ"/>
    <property type="molecule type" value="Genomic_DNA"/>
</dbReference>
<dbReference type="EMBL" id="AB232749">
    <property type="protein sequence ID" value="BAE20293.1"/>
    <property type="status" value="ALT_SEQ"/>
    <property type="molecule type" value="Genomic_DNA"/>
</dbReference>
<dbReference type="EMBL" id="AB232750">
    <property type="protein sequence ID" value="BAE20294.1"/>
    <property type="status" value="ALT_SEQ"/>
    <property type="molecule type" value="Genomic_DNA"/>
</dbReference>
<dbReference type="EMBL" id="AB232751">
    <property type="protein sequence ID" value="BAE20295.1"/>
    <property type="status" value="ALT_SEQ"/>
    <property type="molecule type" value="Genomic_DNA"/>
</dbReference>
<dbReference type="EMBL" id="AB232754">
    <property type="protein sequence ID" value="BAE20298.1"/>
    <property type="status" value="ALT_SEQ"/>
    <property type="molecule type" value="Genomic_DNA"/>
</dbReference>
<dbReference type="EMBL" id="AB232757">
    <property type="protein sequence ID" value="BAE20301.1"/>
    <property type="status" value="ALT_SEQ"/>
    <property type="molecule type" value="Genomic_DNA"/>
</dbReference>
<dbReference type="EMBL" id="AB232758">
    <property type="protein sequence ID" value="BAE20302.1"/>
    <property type="status" value="ALT_SEQ"/>
    <property type="molecule type" value="Genomic_DNA"/>
</dbReference>
<dbReference type="EMBL" id="AB232760">
    <property type="protein sequence ID" value="BAE20304.1"/>
    <property type="status" value="ALT_SEQ"/>
    <property type="molecule type" value="Genomic_DNA"/>
</dbReference>
<dbReference type="EMBL" id="AB232761">
    <property type="protein sequence ID" value="BAE20305.1"/>
    <property type="status" value="ALT_SEQ"/>
    <property type="molecule type" value="Genomic_DNA"/>
</dbReference>
<dbReference type="EMBL" id="AB232762">
    <property type="protein sequence ID" value="BAE20306.1"/>
    <property type="status" value="ALT_SEQ"/>
    <property type="molecule type" value="Genomic_DNA"/>
</dbReference>
<dbReference type="EMBL" id="AB232763">
    <property type="protein sequence ID" value="BAE20307.1"/>
    <property type="status" value="ALT_SEQ"/>
    <property type="molecule type" value="Genomic_DNA"/>
</dbReference>
<dbReference type="EMBL" id="AJ408862">
    <property type="protein sequence ID" value="CAC29128.1"/>
    <property type="molecule type" value="Genomic_DNA"/>
</dbReference>
<dbReference type="EMBL" id="AJ408863">
    <property type="protein sequence ID" value="CAC29129.1"/>
    <property type="molecule type" value="Genomic_DNA"/>
</dbReference>
<dbReference type="EMBL" id="AJ408864">
    <property type="protein sequence ID" value="CAC29130.1"/>
    <property type="molecule type" value="Genomic_DNA"/>
</dbReference>
<dbReference type="PIR" id="JC4565">
    <property type="entry name" value="JC4565"/>
</dbReference>
<dbReference type="PDB" id="1D2K">
    <property type="method" value="X-ray"/>
    <property type="resolution" value="2.20 A"/>
    <property type="chains" value="A=36-427"/>
</dbReference>
<dbReference type="PDB" id="1LL4">
    <property type="method" value="X-ray"/>
    <property type="resolution" value="2.80 A"/>
    <property type="chains" value="A/B/C/D=36-427"/>
</dbReference>
<dbReference type="PDB" id="1LL6">
    <property type="method" value="X-ray"/>
    <property type="resolution" value="2.80 A"/>
    <property type="chains" value="A/B/C/D=36-427"/>
</dbReference>
<dbReference type="PDB" id="1LL7">
    <property type="method" value="X-ray"/>
    <property type="resolution" value="2.00 A"/>
    <property type="chains" value="A/B=36-427"/>
</dbReference>
<dbReference type="PDBsum" id="1D2K"/>
<dbReference type="PDBsum" id="1LL4"/>
<dbReference type="PDBsum" id="1LL6"/>
<dbReference type="PDBsum" id="1LL7"/>
<dbReference type="SMR" id="P0CB51"/>
<dbReference type="STRING" id="443226.P0CB51"/>
<dbReference type="CAZy" id="GH18">
    <property type="family name" value="Glycoside Hydrolase Family 18"/>
</dbReference>
<dbReference type="GlyCosmos" id="P0CB51">
    <property type="glycosylation" value="1 site, No reported glycans"/>
</dbReference>
<dbReference type="VEuPathDB" id="FungiDB:CPSG_08657"/>
<dbReference type="VEuPathDB" id="FungiDB:D8B26_000307"/>
<dbReference type="eggNOG" id="KOG2806">
    <property type="taxonomic scope" value="Eukaryota"/>
</dbReference>
<dbReference type="HOGENOM" id="CLU_002833_1_3_1"/>
<dbReference type="OMA" id="FIQHCQA"/>
<dbReference type="OrthoDB" id="28651at33183"/>
<dbReference type="EvolutionaryTrace" id="P0CB51"/>
<dbReference type="Proteomes" id="UP000002497">
    <property type="component" value="Unassembled WGS sequence"/>
</dbReference>
<dbReference type="GO" id="GO:0005576">
    <property type="term" value="C:extracellular region"/>
    <property type="evidence" value="ECO:0007669"/>
    <property type="project" value="TreeGrafter"/>
</dbReference>
<dbReference type="GO" id="GO:0008061">
    <property type="term" value="F:chitin binding"/>
    <property type="evidence" value="ECO:0007669"/>
    <property type="project" value="UniProtKB-KW"/>
</dbReference>
<dbReference type="GO" id="GO:0008843">
    <property type="term" value="F:endochitinase activity"/>
    <property type="evidence" value="ECO:0007669"/>
    <property type="project" value="UniProtKB-EC"/>
</dbReference>
<dbReference type="GO" id="GO:0006032">
    <property type="term" value="P:chitin catabolic process"/>
    <property type="evidence" value="ECO:0007669"/>
    <property type="project" value="UniProtKB-KW"/>
</dbReference>
<dbReference type="GO" id="GO:0000272">
    <property type="term" value="P:polysaccharide catabolic process"/>
    <property type="evidence" value="ECO:0007669"/>
    <property type="project" value="UniProtKB-KW"/>
</dbReference>
<dbReference type="CDD" id="cd06548">
    <property type="entry name" value="GH18_chitinase"/>
    <property type="match status" value="1"/>
</dbReference>
<dbReference type="FunFam" id="3.10.50.10:FF:000005">
    <property type="entry name" value="Endochitinase B1"/>
    <property type="match status" value="1"/>
</dbReference>
<dbReference type="FunFam" id="3.20.20.80:FF:000095">
    <property type="entry name" value="Endochitinase B1"/>
    <property type="match status" value="1"/>
</dbReference>
<dbReference type="Gene3D" id="3.10.50.10">
    <property type="match status" value="1"/>
</dbReference>
<dbReference type="Gene3D" id="3.20.20.80">
    <property type="entry name" value="Glycosidases"/>
    <property type="match status" value="1"/>
</dbReference>
<dbReference type="InterPro" id="IPR011583">
    <property type="entry name" value="Chitinase_II/V-like_cat"/>
</dbReference>
<dbReference type="InterPro" id="IPR029070">
    <property type="entry name" value="Chitinase_insertion_sf"/>
</dbReference>
<dbReference type="InterPro" id="IPR001223">
    <property type="entry name" value="Glyco_hydro18_cat"/>
</dbReference>
<dbReference type="InterPro" id="IPR001579">
    <property type="entry name" value="Glyco_hydro_18_chit_AS"/>
</dbReference>
<dbReference type="InterPro" id="IPR017853">
    <property type="entry name" value="Glycoside_hydrolase_SF"/>
</dbReference>
<dbReference type="InterPro" id="IPR050314">
    <property type="entry name" value="Glycosyl_Hydrlase_18"/>
</dbReference>
<dbReference type="PANTHER" id="PTHR11177">
    <property type="entry name" value="CHITINASE"/>
    <property type="match status" value="1"/>
</dbReference>
<dbReference type="PANTHER" id="PTHR11177:SF317">
    <property type="entry name" value="CHITINASE 12-RELATED"/>
    <property type="match status" value="1"/>
</dbReference>
<dbReference type="Pfam" id="PF00704">
    <property type="entry name" value="Glyco_hydro_18"/>
    <property type="match status" value="1"/>
</dbReference>
<dbReference type="SMART" id="SM00636">
    <property type="entry name" value="Glyco_18"/>
    <property type="match status" value="1"/>
</dbReference>
<dbReference type="SUPFAM" id="SSF51445">
    <property type="entry name" value="(Trans)glycosidases"/>
    <property type="match status" value="1"/>
</dbReference>
<dbReference type="SUPFAM" id="SSF54556">
    <property type="entry name" value="Chitinase insertion domain"/>
    <property type="match status" value="1"/>
</dbReference>
<dbReference type="PROSITE" id="PS01095">
    <property type="entry name" value="GH18_1"/>
    <property type="match status" value="1"/>
</dbReference>
<dbReference type="PROSITE" id="PS51910">
    <property type="entry name" value="GH18_2"/>
    <property type="match status" value="1"/>
</dbReference>
<reference key="1">
    <citation type="journal article" date="1996" name="Infect. Immun.">
        <title>Molecular cloning and characterization of the Coccidioides immitis complement fixation/chitinase antigen.</title>
        <authorList>
            <person name="Yang C."/>
            <person name="Zhu Y."/>
            <person name="Magee D.M."/>
            <person name="Cox R.A."/>
        </authorList>
    </citation>
    <scope>NUCLEOTIDE SEQUENCE [GENOMIC DNA / MRNA]</scope>
    <source>
        <strain>RMSCC 757 / Silveira</strain>
    </source>
</reference>
<reference key="2">
    <citation type="journal article" date="1996" name="Infect. Immun.">
        <title>Cloning and expression of the complement fixation antigen-chitinase of Coccidioides immitis.</title>
        <authorList>
            <person name="Zimmermann C.R."/>
            <person name="Johnson S.M."/>
            <person name="Martens G.W."/>
            <person name="White A.G."/>
            <person name="Pappagianis D."/>
        </authorList>
    </citation>
    <scope>NUCLEOTIDE SEQUENCE [GENOMIC DNA / MRNA]</scope>
    <source>
        <strain>RMSCC 757 / Silveira</strain>
    </source>
</reference>
<reference key="3">
    <citation type="submission" date="2010-03" db="EMBL/GenBank/DDBJ databases">
        <title>The genome sequence of Coccidioides posadasii strain Silveira.</title>
        <authorList>
            <consortium name="The Broad Institute Genome Sequencing Center for Infectious Disease"/>
            <person name="Neafsey D."/>
            <person name="Orbach M."/>
            <person name="Henn M.R."/>
            <person name="Cole G.T."/>
            <person name="Galgiani J."/>
            <person name="Gardner M.J."/>
            <person name="Kirkland T.N."/>
            <person name="Taylor J.W."/>
            <person name="Young S.K."/>
            <person name="Zeng Q."/>
            <person name="Koehrsen M."/>
            <person name="Alvarado L."/>
            <person name="Berlin A."/>
            <person name="Borenstein D."/>
            <person name="Chapman S.B."/>
            <person name="Chen Z."/>
            <person name="Engels R."/>
            <person name="Freedman E."/>
            <person name="Gellesch M."/>
            <person name="Goldberg J."/>
            <person name="Griggs A."/>
            <person name="Gujja S."/>
            <person name="Heilman E."/>
            <person name="Heiman D."/>
            <person name="Howarth C."/>
            <person name="Jen D."/>
            <person name="Larson L."/>
            <person name="Mehta T."/>
            <person name="Neiman D."/>
            <person name="Park D."/>
            <person name="Pearson M."/>
            <person name="Richards J."/>
            <person name="Roberts A."/>
            <person name="Saif S."/>
            <person name="Shea T."/>
            <person name="Shenoy N."/>
            <person name="Sisk P."/>
            <person name="Stolte C."/>
            <person name="Sykes S."/>
            <person name="Walk T."/>
            <person name="White J."/>
            <person name="Yandava C."/>
            <person name="Haas B."/>
            <person name="Nusbaum C."/>
            <person name="Birren B."/>
        </authorList>
    </citation>
    <scope>NUCLEOTIDE SEQUENCE [LARGE SCALE GENOMIC DNA]</scope>
    <source>
        <strain>RMSCC 757 / Silveira</strain>
    </source>
</reference>
<reference key="4">
    <citation type="journal article" date="2006" name="Nippon Ishinkin Gakkai Zasshi">
        <title>Reexamination of Coccidioides spp. reserved in the Research Center for Pathogenic Fungi and Microbial Toxicoses, Chiba University, based on a multiple gene analysis.</title>
        <authorList>
            <person name="Sano A."/>
            <person name="Miyaji M."/>
            <person name="Kamei K."/>
            <person name="Mikami Y."/>
            <person name="Nishimura K."/>
        </authorList>
    </citation>
    <scope>NUCLEOTIDE SEQUENCE [GENOMIC DNA] OF 11-151</scope>
    <source>
        <strain>IFM 45809 / Silveira</strain>
        <strain>IFM 45810 / Silveira</strain>
        <strain>IFM 45811</strain>
        <strain>IFM 45812</strain>
        <strain>IFM 45813</strain>
        <strain>IFM 45817</strain>
        <strain>IFM 4935</strain>
        <strain>IFM 4945</strain>
        <strain>IFM 50993</strain>
        <strain>IFM 50994</strain>
        <strain>IFM 51112</strain>
        <strain>IFM 54194</strain>
        <strain>IFM 54195</strain>
        <strain>IFM 54196</strain>
    </source>
</reference>
<reference key="5">
    <citation type="journal article" date="1993" name="Infect. Immun.">
        <title>Amino-terminal sequence analysis of the Coccidioides immitis chitinase/immunodiffusion-complement fixation protein.</title>
        <authorList>
            <person name="Johnson S.M."/>
            <person name="Zimmermann C.R."/>
            <person name="Pappagianis D."/>
        </authorList>
    </citation>
    <scope>PROTEIN SEQUENCE OF 18-38</scope>
    <source>
        <strain>RMSCC 757 / Silveira</strain>
    </source>
</reference>
<reference key="6">
    <citation type="journal article" date="1997" name="Proc. Natl. Acad. Sci. U.S.A.">
        <title>Concordance of gene genealogies reveals reproductive isolation in the pathogenic fungus Coccidioides immitis.</title>
        <authorList>
            <person name="Koufopanou V."/>
            <person name="Burt A."/>
            <person name="Taylor J.W."/>
        </authorList>
    </citation>
    <scope>NUCLEOTIDE SEQUENCE [GENOMIC DNA] OF 19-145</scope>
    <scope>VARIANT SER-26</scope>
    <source>
        <strain>RMSCC 1036 / AZ1</strain>
        <strain>RMSCC 2128 / TX1</strain>
        <strain>RMSCC 757 / Silveira</strain>
    </source>
</reference>
<reference key="7">
    <citation type="journal article" date="1998" name="Proc. Natl. Acad. Sci. U.S.A.">
        <authorList>
            <person name="Koufopanou V."/>
            <person name="Burt A."/>
            <person name="Taylor J.W."/>
        </authorList>
    </citation>
    <scope>ERRATUM OF PUBMED:9144263</scope>
</reference>
<reference key="8">
    <citation type="journal article" date="1990" name="J. Clin. Microbiol.">
        <title>Purification and amino-terminal sequence analysis of the complement-fixing and precipitin antigens from Coccidioides immitis.</title>
        <authorList>
            <person name="Resnick S."/>
            <person name="Zimmer B."/>
            <person name="Pappagianis D."/>
            <person name="Eakin A."/>
            <person name="McKerrow J."/>
        </authorList>
    </citation>
    <scope>PROTEIN SEQUENCE OF 26-52</scope>
    <source>
        <strain>RMSCC 757 / Silveira</strain>
    </source>
</reference>
<reference key="9">
    <citation type="journal article" date="2001" name="Biochemistry">
        <title>Kinetic properties of chitinase-1 from the fungal pathogen Coccidioides immitis.</title>
        <authorList>
            <person name="Fukamizo T."/>
            <person name="Sasaki C."/>
            <person name="Schelp E."/>
            <person name="Bortone K."/>
            <person name="Robertus J.D."/>
        </authorList>
    </citation>
    <scope>BIOPHYSICOCHEMICAL PROPERTIES</scope>
    <source>
        <strain>RMSCC 757 / Silveira</strain>
    </source>
</reference>
<reference key="10">
    <citation type="journal article" date="2000" name="Protein Sci.">
        <title>The X-ray structure of a chitinase from the pathogenic fungus Coccidioides immitis.</title>
        <authorList>
            <person name="Hollis T."/>
            <person name="Monzingo A.F."/>
            <person name="Bortone K."/>
            <person name="Ernst S."/>
            <person name="Cox R.A."/>
            <person name="Robertus J.D."/>
        </authorList>
    </citation>
    <scope>X-RAY CRYSTALLOGRAPHY (2.2 ANGSTROMS) OF 36-427</scope>
    <scope>PROTEIN SEQUENCE OF 27-41</scope>
    <scope>MUTAGENESIS OF GLU-171</scope>
    <source>
        <strain>RMSCC 757 / Silveira</strain>
    </source>
</reference>
<reference key="11">
    <citation type="journal article" date="2002" name="J. Mol. Biol.">
        <title>The structure of an allosamidin complex with the Coccidioides immitis chitinase defines a role for a second acid residue in substrate-assisted mechanism.</title>
        <authorList>
            <person name="Bortone K."/>
            <person name="Monzingo A.F."/>
            <person name="Ernst S."/>
            <person name="Robertus J.D."/>
        </authorList>
    </citation>
    <scope>X-RAY CRYSTALLOGRAPHY (2.0 ANGSTROMS) OF 36-427 OF WILD-TYPE IN COMPLEX WITH INHIBITOR AND OF MUTANTS ASN-169 AND GLN-171</scope>
    <source>
        <strain>RMSCC 757 / Silveira</strain>
    </source>
</reference>
<feature type="signal peptide" evidence="5">
    <location>
        <begin position="1"/>
        <end position="17"/>
    </location>
</feature>
<feature type="chain" id="PRO_0000011927" description="Endochitinase 1">
    <location>
        <begin position="18"/>
        <end position="427"/>
    </location>
</feature>
<feature type="domain" description="GH18" evidence="2">
    <location>
        <begin position="38"/>
        <end position="401"/>
    </location>
</feature>
<feature type="active site" description="Proton donor" evidence="2">
    <location>
        <position position="171"/>
    </location>
</feature>
<feature type="binding site" evidence="2">
    <location>
        <begin position="102"/>
        <end position="103"/>
    </location>
    <ligand>
        <name>chitin</name>
        <dbReference type="ChEBI" id="CHEBI:17029"/>
    </ligand>
</feature>
<feature type="binding site" evidence="2">
    <location>
        <begin position="129"/>
        <end position="132"/>
    </location>
    <ligand>
        <name>chitin</name>
        <dbReference type="ChEBI" id="CHEBI:17029"/>
    </ligand>
</feature>
<feature type="binding site" evidence="2">
    <location>
        <position position="172"/>
    </location>
    <ligand>
        <name>chitin</name>
        <dbReference type="ChEBI" id="CHEBI:17029"/>
    </ligand>
</feature>
<feature type="binding site" evidence="2">
    <location>
        <begin position="237"/>
        <end position="240"/>
    </location>
    <ligand>
        <name>chitin</name>
        <dbReference type="ChEBI" id="CHEBI:17029"/>
    </ligand>
</feature>
<feature type="binding site" evidence="2">
    <location>
        <position position="378"/>
    </location>
    <ligand>
        <name>chitin</name>
        <dbReference type="ChEBI" id="CHEBI:17029"/>
    </ligand>
</feature>
<feature type="site" description="Transition state stabilizer">
    <location>
        <position position="169"/>
    </location>
</feature>
<feature type="glycosylation site" description="N-linked (GlcNAc...) asparagine" evidence="1">
    <location>
        <position position="387"/>
    </location>
</feature>
<feature type="sequence variant" description="In strain: IFM 50993.">
    <original>T</original>
    <variation>I</variation>
    <location>
        <position position="13"/>
    </location>
</feature>
<feature type="sequence variant" description="In strain: IFM 45811, IFM 45812, IFM 45813, IFM 45817, IFM 4935, IFM 4945, IFM 50993, IFM 50994, IFM 51112, IFM 54194, IFM 54195, IFM 54196, RMSCC 1036 / AZ1 and RMSCC 2128 / TX1." evidence="6">
    <original>Y</original>
    <variation>S</variation>
    <location>
        <position position="26"/>
    </location>
</feature>
<feature type="sequence variant" description="In strain: IFM 45811, IFM 45817, IFM 4945 and IFM 50994.">
    <original>N</original>
    <variation>K</variation>
    <location>
        <position position="103"/>
    </location>
</feature>
<feature type="sequence variant" description="In strain: IFM 45811, IFM 45817, IFM 4945 and IFM 50994.">
    <original>I</original>
    <variation>T</variation>
    <location>
        <position position="109"/>
    </location>
</feature>
<feature type="mutagenesis site" description="Loss of function.">
    <original>D</original>
    <variation>N</variation>
    <location>
        <position position="169"/>
    </location>
</feature>
<feature type="mutagenesis site" description="Loss of function." evidence="3">
    <original>E</original>
    <variation>Q</variation>
    <location>
        <position position="171"/>
    </location>
</feature>
<feature type="sequence conflict" description="In Ref. 5; AA sequence." evidence="7" ref="5">
    <original>S</original>
    <variation>P</variation>
    <location>
        <position position="19"/>
    </location>
</feature>
<feature type="sequence conflict" description="In Ref. 5; AA sequence." evidence="7" ref="5">
    <original>E</original>
    <variation>G</variation>
    <location>
        <position position="31"/>
    </location>
</feature>
<feature type="sequence conflict" description="In Ref. 8; AA sequence." evidence="7" ref="8">
    <original>S</original>
    <variation>A</variation>
    <location>
        <position position="40"/>
    </location>
</feature>
<feature type="sequence conflict" description="In Ref. 8; AA sequence." evidence="7" ref="8">
    <original>W</original>
    <variation>R</variation>
    <location>
        <position position="47"/>
    </location>
</feature>
<feature type="sequence conflict" description="In Ref. 1; AAA96515/AAB06687." evidence="7" ref="1">
    <original>K</original>
    <variation>N</variation>
    <location>
        <position position="199"/>
    </location>
</feature>
<feature type="strand" evidence="10">
    <location>
        <begin position="38"/>
        <end position="45"/>
    </location>
</feature>
<feature type="helix" evidence="10">
    <location>
        <begin position="46"/>
        <end position="49"/>
    </location>
</feature>
<feature type="turn" evidence="9">
    <location>
        <begin position="50"/>
        <end position="52"/>
    </location>
</feature>
<feature type="helix" evidence="10">
    <location>
        <begin position="56"/>
        <end position="58"/>
    </location>
</feature>
<feature type="helix" evidence="10">
    <location>
        <begin position="61"/>
        <end position="63"/>
    </location>
</feature>
<feature type="strand" evidence="10">
    <location>
        <begin position="65"/>
        <end position="74"/>
    </location>
</feature>
<feature type="strand" evidence="10">
    <location>
        <begin position="80"/>
        <end position="83"/>
    </location>
</feature>
<feature type="helix" evidence="10">
    <location>
        <begin position="85"/>
        <end position="88"/>
    </location>
</feature>
<feature type="strand" evidence="8">
    <location>
        <begin position="101"/>
        <end position="103"/>
    </location>
</feature>
<feature type="helix" evidence="10">
    <location>
        <begin position="107"/>
        <end position="118"/>
    </location>
</feature>
<feature type="strand" evidence="10">
    <location>
        <begin position="123"/>
        <end position="129"/>
    </location>
</feature>
<feature type="helix" evidence="10">
    <location>
        <begin position="130"/>
        <end position="133"/>
    </location>
</feature>
<feature type="helix" evidence="10">
    <location>
        <begin position="134"/>
        <end position="136"/>
    </location>
</feature>
<feature type="helix" evidence="10">
    <location>
        <begin position="138"/>
        <end position="141"/>
    </location>
</feature>
<feature type="helix" evidence="10">
    <location>
        <begin position="144"/>
        <end position="161"/>
    </location>
</feature>
<feature type="strand" evidence="10">
    <location>
        <begin position="164"/>
        <end position="169"/>
    </location>
</feature>
<feature type="helix" evidence="10">
    <location>
        <begin position="176"/>
        <end position="198"/>
    </location>
</feature>
<feature type="strand" evidence="10">
    <location>
        <begin position="207"/>
        <end position="213"/>
    </location>
</feature>
<feature type="helix" evidence="10">
    <location>
        <begin position="216"/>
        <end position="219"/>
    </location>
</feature>
<feature type="helix" evidence="10">
    <location>
        <begin position="224"/>
        <end position="228"/>
    </location>
</feature>
<feature type="strand" evidence="10">
    <location>
        <begin position="232"/>
        <end position="237"/>
    </location>
</feature>
<feature type="strand" evidence="10">
    <location>
        <begin position="241"/>
        <end position="243"/>
    </location>
</feature>
<feature type="strand" evidence="10">
    <location>
        <begin position="246"/>
        <end position="248"/>
    </location>
</feature>
<feature type="helix" evidence="10">
    <location>
        <begin position="262"/>
        <end position="264"/>
    </location>
</feature>
<feature type="helix" evidence="10">
    <location>
        <begin position="269"/>
        <end position="278"/>
    </location>
</feature>
<feature type="helix" evidence="10">
    <location>
        <begin position="283"/>
        <end position="285"/>
    </location>
</feature>
<feature type="strand" evidence="10">
    <location>
        <begin position="286"/>
        <end position="297"/>
    </location>
</feature>
<feature type="strand" evidence="10">
    <location>
        <begin position="313"/>
        <end position="316"/>
    </location>
</feature>
<feature type="strand" evidence="10">
    <location>
        <begin position="319"/>
        <end position="321"/>
    </location>
</feature>
<feature type="helix" evidence="10">
    <location>
        <begin position="322"/>
        <end position="324"/>
    </location>
</feature>
<feature type="strand" evidence="10">
    <location>
        <begin position="331"/>
        <end position="335"/>
    </location>
</feature>
<feature type="turn" evidence="10">
    <location>
        <begin position="336"/>
        <end position="339"/>
    </location>
</feature>
<feature type="strand" evidence="10">
    <location>
        <begin position="340"/>
        <end position="345"/>
    </location>
</feature>
<feature type="turn" evidence="10">
    <location>
        <begin position="346"/>
        <end position="349"/>
    </location>
</feature>
<feature type="strand" evidence="10">
    <location>
        <begin position="350"/>
        <end position="353"/>
    </location>
</feature>
<feature type="helix" evidence="10">
    <location>
        <begin position="357"/>
        <end position="369"/>
    </location>
</feature>
<feature type="strand" evidence="10">
    <location>
        <begin position="374"/>
        <end position="378"/>
    </location>
</feature>
<feature type="helix" evidence="10">
    <location>
        <begin position="386"/>
        <end position="388"/>
    </location>
</feature>
<feature type="helix" evidence="10">
    <location>
        <begin position="390"/>
        <end position="397"/>
    </location>
</feature>
<feature type="helix" evidence="10">
    <location>
        <begin position="401"/>
        <end position="403"/>
    </location>
</feature>
<feature type="helix" evidence="10">
    <location>
        <begin position="419"/>
        <end position="422"/>
    </location>
</feature>
<accession>P0CB51</accession>
<accession>E9DFQ8</accession>
<accession>P54196</accession>
<accession>Q00432</accession>
<accession>Q00435</accession>
<accession>Q400W4</accession>
<accession>Q400W5</accession>
<accession>Q400W6</accession>
<accession>Q9C0M7</accession>
<accession>Q9C2W1</accession>
<comment type="catalytic activity">
    <reaction>
        <text>Random endo-hydrolysis of N-acetyl-beta-D-glucosaminide (1-&gt;4)-beta-linkages in chitin and chitodextrins.</text>
        <dbReference type="EC" id="3.2.1.14"/>
    </reaction>
</comment>
<comment type="biophysicochemical properties">
    <phDependence>
        <text evidence="4">Optimum pH is 6.0. Active from pH 4 to 8.</text>
    </phDependence>
</comment>
<comment type="similarity">
    <text evidence="7">Belongs to the glycosyl hydrolase 18 family. Chitinase class V subfamily.</text>
</comment>
<comment type="sequence caution" evidence="7">
    <conflict type="erroneous gene model prediction">
        <sequence resource="EMBL-CDS" id="BAE20289"/>
    </conflict>
</comment>
<comment type="sequence caution" evidence="7">
    <conflict type="erroneous gene model prediction">
        <sequence resource="EMBL-CDS" id="BAE20290"/>
    </conflict>
</comment>
<comment type="sequence caution" evidence="7">
    <conflict type="erroneous gene model prediction">
        <sequence resource="EMBL-CDS" id="BAE20291"/>
    </conflict>
</comment>
<comment type="sequence caution" evidence="7">
    <conflict type="erroneous gene model prediction">
        <sequence resource="EMBL-CDS" id="BAE20292"/>
    </conflict>
</comment>
<comment type="sequence caution" evidence="7">
    <conflict type="erroneous gene model prediction">
        <sequence resource="EMBL-CDS" id="BAE20293"/>
    </conflict>
</comment>
<comment type="sequence caution" evidence="7">
    <conflict type="erroneous gene model prediction">
        <sequence resource="EMBL-CDS" id="BAE20294"/>
    </conflict>
</comment>
<comment type="sequence caution" evidence="7">
    <conflict type="erroneous gene model prediction">
        <sequence resource="EMBL-CDS" id="BAE20295"/>
    </conflict>
</comment>
<comment type="sequence caution" evidence="7">
    <conflict type="erroneous gene model prediction">
        <sequence resource="EMBL-CDS" id="BAE20298"/>
    </conflict>
</comment>
<comment type="sequence caution" evidence="7">
    <conflict type="erroneous gene model prediction">
        <sequence resource="EMBL-CDS" id="BAE20301"/>
    </conflict>
</comment>
<comment type="sequence caution" evidence="7">
    <conflict type="erroneous gene model prediction">
        <sequence resource="EMBL-CDS" id="BAE20302"/>
    </conflict>
</comment>
<comment type="sequence caution" evidence="7">
    <conflict type="erroneous gene model prediction">
        <sequence resource="EMBL-CDS" id="BAE20304"/>
    </conflict>
</comment>
<comment type="sequence caution" evidence="7">
    <conflict type="erroneous gene model prediction">
        <sequence resource="EMBL-CDS" id="BAE20305"/>
    </conflict>
</comment>
<comment type="sequence caution" evidence="7">
    <conflict type="erroneous gene model prediction">
        <sequence resource="EMBL-CDS" id="BAE20306"/>
    </conflict>
</comment>
<comment type="sequence caution" evidence="7">
    <conflict type="erroneous gene model prediction">
        <sequence resource="EMBL-CDS" id="BAE20307"/>
    </conflict>
</comment>
<organism>
    <name type="scientific">Coccidioides posadasii (strain RMSCC 757 / Silveira)</name>
    <name type="common">Valley fever fungus</name>
    <dbReference type="NCBI Taxonomy" id="443226"/>
    <lineage>
        <taxon>Eukaryota</taxon>
        <taxon>Fungi</taxon>
        <taxon>Dikarya</taxon>
        <taxon>Ascomycota</taxon>
        <taxon>Pezizomycotina</taxon>
        <taxon>Eurotiomycetes</taxon>
        <taxon>Eurotiomycetidae</taxon>
        <taxon>Onygenales</taxon>
        <taxon>Onygenaceae</taxon>
        <taxon>Coccidioides</taxon>
    </lineage>
</organism>
<keyword id="KW-0002">3D-structure</keyword>
<keyword id="KW-0119">Carbohydrate metabolism</keyword>
<keyword id="KW-0146">Chitin degradation</keyword>
<keyword id="KW-0147">Chitin-binding</keyword>
<keyword id="KW-0903">Direct protein sequencing</keyword>
<keyword id="KW-0325">Glycoprotein</keyword>
<keyword id="KW-0326">Glycosidase</keyword>
<keyword id="KW-0378">Hydrolase</keyword>
<keyword id="KW-0624">Polysaccharide degradation</keyword>
<keyword id="KW-1185">Reference proteome</keyword>
<keyword id="KW-0732">Signal</keyword>
<evidence type="ECO:0000255" key="1"/>
<evidence type="ECO:0000255" key="2">
    <source>
        <dbReference type="PROSITE-ProRule" id="PRU01258"/>
    </source>
</evidence>
<evidence type="ECO:0000269" key="3">
    <source>
    </source>
</evidence>
<evidence type="ECO:0000269" key="4">
    <source>
    </source>
</evidence>
<evidence type="ECO:0000269" key="5">
    <source>
    </source>
</evidence>
<evidence type="ECO:0000269" key="6">
    <source>
    </source>
</evidence>
<evidence type="ECO:0000305" key="7"/>
<evidence type="ECO:0007829" key="8">
    <source>
        <dbReference type="PDB" id="1D2K"/>
    </source>
</evidence>
<evidence type="ECO:0007829" key="9">
    <source>
        <dbReference type="PDB" id="1LL4"/>
    </source>
</evidence>
<evidence type="ECO:0007829" key="10">
    <source>
        <dbReference type="PDB" id="1LL7"/>
    </source>
</evidence>
<gene>
    <name type="primary">CTS1</name>
    <name type="ORF">CPSG_08657</name>
</gene>
<sequence>MRFLIGALLTLQTLVQASSMSSMPNYYPVPEAPAEGGFRSVVYFVNWAIYGRGHNPQDLKADQFTHILYAFANIRPSGEVYLSDTWADTDKHYPGDKWDEPGNNVYGCIKQMYLLKKNNRNLKTLLSIGGWTYSPNFKTPASTEEGRKKFADTSLKLMKDLGFDGIDIDWEYPEDEKQANDFVLLLKACREALDAYSAKHPNGKKFLLTIASPAGPQNYNKLKLAEMDKYLDFWNLMAYDFSGSWDKVSGHMSNVFPSTTKPESTPFSSDKAVKDYIKAGVPANKIVLGMPLYGRAFASTDGIGTSFNGVGGGSWENGVWDYKDMPQQGAQVTELEDIAASYSYDKNKRYLISYDTVKIAGKKAEYITKNGMGGGMWWESSSDKTGNESLVGTVVNGLGGTGKLEQRENELSYPESVYDNLKNGMPS</sequence>
<name>CHI1_COCPS</name>